<proteinExistence type="inferred from homology"/>
<gene>
    <name evidence="1" type="primary">rlmN</name>
    <name type="ordered locus">BPUM_1474</name>
</gene>
<reference key="1">
    <citation type="journal article" date="2007" name="PLoS ONE">
        <title>Paradoxical DNA repair and peroxide resistance gene conservation in Bacillus pumilus SAFR-032.</title>
        <authorList>
            <person name="Gioia J."/>
            <person name="Yerrapragada S."/>
            <person name="Qin X."/>
            <person name="Jiang H."/>
            <person name="Igboeli O.C."/>
            <person name="Muzny D."/>
            <person name="Dugan-Rocha S."/>
            <person name="Ding Y."/>
            <person name="Hawes A."/>
            <person name="Liu W."/>
            <person name="Perez L."/>
            <person name="Kovar C."/>
            <person name="Dinh H."/>
            <person name="Lee S."/>
            <person name="Nazareth L."/>
            <person name="Blyth P."/>
            <person name="Holder M."/>
            <person name="Buhay C."/>
            <person name="Tirumalai M.R."/>
            <person name="Liu Y."/>
            <person name="Dasgupta I."/>
            <person name="Bokhetache L."/>
            <person name="Fujita M."/>
            <person name="Karouia F."/>
            <person name="Eswara Moorthy P."/>
            <person name="Siefert J."/>
            <person name="Uzman A."/>
            <person name="Buzumbo P."/>
            <person name="Verma A."/>
            <person name="Zwiya H."/>
            <person name="McWilliams B.D."/>
            <person name="Olowu A."/>
            <person name="Clinkenbeard K.D."/>
            <person name="Newcombe D."/>
            <person name="Golebiewski L."/>
            <person name="Petrosino J.F."/>
            <person name="Nicholson W.L."/>
            <person name="Fox G.E."/>
            <person name="Venkateswaran K."/>
            <person name="Highlander S.K."/>
            <person name="Weinstock G.M."/>
        </authorList>
    </citation>
    <scope>NUCLEOTIDE SEQUENCE [LARGE SCALE GENOMIC DNA]</scope>
    <source>
        <strain>SAFR-032</strain>
    </source>
</reference>
<accession>A8FD40</accession>
<dbReference type="EC" id="2.1.1.192" evidence="1"/>
<dbReference type="EMBL" id="CP000813">
    <property type="protein sequence ID" value="ABV62157.1"/>
    <property type="molecule type" value="Genomic_DNA"/>
</dbReference>
<dbReference type="RefSeq" id="WP_012009917.1">
    <property type="nucleotide sequence ID" value="NZ_VEIS01000003.1"/>
</dbReference>
<dbReference type="SMR" id="A8FD40"/>
<dbReference type="STRING" id="315750.BPUM_1474"/>
<dbReference type="GeneID" id="5620737"/>
<dbReference type="KEGG" id="bpu:BPUM_1474"/>
<dbReference type="eggNOG" id="COG0820">
    <property type="taxonomic scope" value="Bacteria"/>
</dbReference>
<dbReference type="HOGENOM" id="CLU_029101_0_1_9"/>
<dbReference type="OrthoDB" id="9793973at2"/>
<dbReference type="Proteomes" id="UP000001355">
    <property type="component" value="Chromosome"/>
</dbReference>
<dbReference type="GO" id="GO:0005737">
    <property type="term" value="C:cytoplasm"/>
    <property type="evidence" value="ECO:0007669"/>
    <property type="project" value="UniProtKB-SubCell"/>
</dbReference>
<dbReference type="GO" id="GO:0051539">
    <property type="term" value="F:4 iron, 4 sulfur cluster binding"/>
    <property type="evidence" value="ECO:0007669"/>
    <property type="project" value="UniProtKB-UniRule"/>
</dbReference>
<dbReference type="GO" id="GO:0046872">
    <property type="term" value="F:metal ion binding"/>
    <property type="evidence" value="ECO:0007669"/>
    <property type="project" value="UniProtKB-KW"/>
</dbReference>
<dbReference type="GO" id="GO:0070040">
    <property type="term" value="F:rRNA (adenine(2503)-C2-)-methyltransferase activity"/>
    <property type="evidence" value="ECO:0007669"/>
    <property type="project" value="UniProtKB-UniRule"/>
</dbReference>
<dbReference type="GO" id="GO:0019843">
    <property type="term" value="F:rRNA binding"/>
    <property type="evidence" value="ECO:0007669"/>
    <property type="project" value="UniProtKB-UniRule"/>
</dbReference>
<dbReference type="GO" id="GO:0002935">
    <property type="term" value="F:tRNA (adenine(37)-C2)-methyltransferase activity"/>
    <property type="evidence" value="ECO:0007669"/>
    <property type="project" value="UniProtKB-UniRule"/>
</dbReference>
<dbReference type="GO" id="GO:0000049">
    <property type="term" value="F:tRNA binding"/>
    <property type="evidence" value="ECO:0007669"/>
    <property type="project" value="UniProtKB-UniRule"/>
</dbReference>
<dbReference type="GO" id="GO:0070475">
    <property type="term" value="P:rRNA base methylation"/>
    <property type="evidence" value="ECO:0007669"/>
    <property type="project" value="UniProtKB-UniRule"/>
</dbReference>
<dbReference type="GO" id="GO:0030488">
    <property type="term" value="P:tRNA methylation"/>
    <property type="evidence" value="ECO:0007669"/>
    <property type="project" value="UniProtKB-UniRule"/>
</dbReference>
<dbReference type="CDD" id="cd01335">
    <property type="entry name" value="Radical_SAM"/>
    <property type="match status" value="1"/>
</dbReference>
<dbReference type="FunFam" id="1.10.150.530:FF:000002">
    <property type="entry name" value="Probable dual-specificity RNA methyltransferase RlmN"/>
    <property type="match status" value="1"/>
</dbReference>
<dbReference type="FunFam" id="3.20.20.70:FF:000014">
    <property type="entry name" value="Probable dual-specificity RNA methyltransferase RlmN"/>
    <property type="match status" value="1"/>
</dbReference>
<dbReference type="Gene3D" id="1.10.150.530">
    <property type="match status" value="1"/>
</dbReference>
<dbReference type="Gene3D" id="3.20.20.70">
    <property type="entry name" value="Aldolase class I"/>
    <property type="match status" value="1"/>
</dbReference>
<dbReference type="HAMAP" id="MF_01849">
    <property type="entry name" value="RNA_methyltr_RlmN"/>
    <property type="match status" value="1"/>
</dbReference>
<dbReference type="InterPro" id="IPR013785">
    <property type="entry name" value="Aldolase_TIM"/>
</dbReference>
<dbReference type="InterPro" id="IPR040072">
    <property type="entry name" value="Methyltransferase_A"/>
</dbReference>
<dbReference type="InterPro" id="IPR048641">
    <property type="entry name" value="RlmN_N"/>
</dbReference>
<dbReference type="InterPro" id="IPR027492">
    <property type="entry name" value="RNA_MTrfase_RlmN"/>
</dbReference>
<dbReference type="InterPro" id="IPR004383">
    <property type="entry name" value="rRNA_lsu_MTrfase_RlmN/Cfr"/>
</dbReference>
<dbReference type="InterPro" id="IPR007197">
    <property type="entry name" value="rSAM"/>
</dbReference>
<dbReference type="NCBIfam" id="TIGR00048">
    <property type="entry name" value="rRNA_mod_RlmN"/>
    <property type="match status" value="1"/>
</dbReference>
<dbReference type="PANTHER" id="PTHR30544">
    <property type="entry name" value="23S RRNA METHYLTRANSFERASE"/>
    <property type="match status" value="1"/>
</dbReference>
<dbReference type="PANTHER" id="PTHR30544:SF5">
    <property type="entry name" value="RADICAL SAM CORE DOMAIN-CONTAINING PROTEIN"/>
    <property type="match status" value="1"/>
</dbReference>
<dbReference type="Pfam" id="PF04055">
    <property type="entry name" value="Radical_SAM"/>
    <property type="match status" value="1"/>
</dbReference>
<dbReference type="Pfam" id="PF21016">
    <property type="entry name" value="RlmN_N"/>
    <property type="match status" value="1"/>
</dbReference>
<dbReference type="PIRSF" id="PIRSF006004">
    <property type="entry name" value="CHP00048"/>
    <property type="match status" value="1"/>
</dbReference>
<dbReference type="SFLD" id="SFLDF00275">
    <property type="entry name" value="adenosine_C2_methyltransferase"/>
    <property type="match status" value="1"/>
</dbReference>
<dbReference type="SFLD" id="SFLDS00029">
    <property type="entry name" value="Radical_SAM"/>
    <property type="match status" value="1"/>
</dbReference>
<dbReference type="SUPFAM" id="SSF102114">
    <property type="entry name" value="Radical SAM enzymes"/>
    <property type="match status" value="1"/>
</dbReference>
<dbReference type="PROSITE" id="PS51918">
    <property type="entry name" value="RADICAL_SAM"/>
    <property type="match status" value="1"/>
</dbReference>
<comment type="function">
    <text evidence="1">Specifically methylates position 2 of adenine 2503 in 23S rRNA and position 2 of adenine 37 in tRNAs.</text>
</comment>
<comment type="catalytic activity">
    <reaction evidence="1">
        <text>adenosine(2503) in 23S rRNA + 2 reduced [2Fe-2S]-[ferredoxin] + 2 S-adenosyl-L-methionine = 2-methyladenosine(2503) in 23S rRNA + 5'-deoxyadenosine + L-methionine + 2 oxidized [2Fe-2S]-[ferredoxin] + S-adenosyl-L-homocysteine</text>
        <dbReference type="Rhea" id="RHEA:42916"/>
        <dbReference type="Rhea" id="RHEA-COMP:10000"/>
        <dbReference type="Rhea" id="RHEA-COMP:10001"/>
        <dbReference type="Rhea" id="RHEA-COMP:10152"/>
        <dbReference type="Rhea" id="RHEA-COMP:10282"/>
        <dbReference type="ChEBI" id="CHEBI:17319"/>
        <dbReference type="ChEBI" id="CHEBI:33737"/>
        <dbReference type="ChEBI" id="CHEBI:33738"/>
        <dbReference type="ChEBI" id="CHEBI:57844"/>
        <dbReference type="ChEBI" id="CHEBI:57856"/>
        <dbReference type="ChEBI" id="CHEBI:59789"/>
        <dbReference type="ChEBI" id="CHEBI:74411"/>
        <dbReference type="ChEBI" id="CHEBI:74497"/>
        <dbReference type="EC" id="2.1.1.192"/>
    </reaction>
</comment>
<comment type="catalytic activity">
    <reaction evidence="1">
        <text>adenosine(37) in tRNA + 2 reduced [2Fe-2S]-[ferredoxin] + 2 S-adenosyl-L-methionine = 2-methyladenosine(37) in tRNA + 5'-deoxyadenosine + L-methionine + 2 oxidized [2Fe-2S]-[ferredoxin] + S-adenosyl-L-homocysteine</text>
        <dbReference type="Rhea" id="RHEA:43332"/>
        <dbReference type="Rhea" id="RHEA-COMP:10000"/>
        <dbReference type="Rhea" id="RHEA-COMP:10001"/>
        <dbReference type="Rhea" id="RHEA-COMP:10162"/>
        <dbReference type="Rhea" id="RHEA-COMP:10485"/>
        <dbReference type="ChEBI" id="CHEBI:17319"/>
        <dbReference type="ChEBI" id="CHEBI:33737"/>
        <dbReference type="ChEBI" id="CHEBI:33738"/>
        <dbReference type="ChEBI" id="CHEBI:57844"/>
        <dbReference type="ChEBI" id="CHEBI:57856"/>
        <dbReference type="ChEBI" id="CHEBI:59789"/>
        <dbReference type="ChEBI" id="CHEBI:74411"/>
        <dbReference type="ChEBI" id="CHEBI:74497"/>
        <dbReference type="EC" id="2.1.1.192"/>
    </reaction>
</comment>
<comment type="cofactor">
    <cofactor evidence="1">
        <name>[4Fe-4S] cluster</name>
        <dbReference type="ChEBI" id="CHEBI:49883"/>
    </cofactor>
    <text evidence="1">Binds 1 [4Fe-4S] cluster. The cluster is coordinated with 3 cysteines and an exchangeable S-adenosyl-L-methionine.</text>
</comment>
<comment type="subcellular location">
    <subcellularLocation>
        <location evidence="1">Cytoplasm</location>
    </subcellularLocation>
</comment>
<comment type="miscellaneous">
    <text evidence="1">Reaction proceeds by a ping-pong mechanism involving intermediate methylation of a conserved cysteine residue.</text>
</comment>
<comment type="similarity">
    <text evidence="1">Belongs to the radical SAM superfamily. RlmN family.</text>
</comment>
<evidence type="ECO:0000255" key="1">
    <source>
        <dbReference type="HAMAP-Rule" id="MF_01849"/>
    </source>
</evidence>
<evidence type="ECO:0000255" key="2">
    <source>
        <dbReference type="PROSITE-ProRule" id="PRU01266"/>
    </source>
</evidence>
<protein>
    <recommendedName>
        <fullName evidence="1">Probable dual-specificity RNA methyltransferase RlmN</fullName>
        <ecNumber evidence="1">2.1.1.192</ecNumber>
    </recommendedName>
    <alternativeName>
        <fullName evidence="1">23S rRNA (adenine(2503)-C(2))-methyltransferase</fullName>
    </alternativeName>
    <alternativeName>
        <fullName evidence="1">23S rRNA m2A2503 methyltransferase</fullName>
    </alternativeName>
    <alternativeName>
        <fullName evidence="1">Ribosomal RNA large subunit methyltransferase N</fullName>
    </alternativeName>
    <alternativeName>
        <fullName evidence="1">tRNA (adenine(37)-C(2))-methyltransferase</fullName>
    </alternativeName>
    <alternativeName>
        <fullName evidence="1">tRNA m2A37 methyltransferase</fullName>
    </alternativeName>
</protein>
<sequence length="360" mass="41401">MTEQKVRKELKTDMPSIYSFELHEMKEWLKEQDEKPFRAAQIFEWLYEKRVTSFDAMSNLSKELREKLKAQFAITTLKTVIKQTSQDGTIKFLFELHDGYTIETVLMRHEYGNSVCVTTQVGCRIGCTFCASTLGGLKRNLEAGEIVAQVLKVQQALDETDERVSSVVIMGIGEPFDNFEEMLAFLKIINHDNGLNIGARHITVSTSGIIPKIYQFADEQMQINFAVSLHAPNTEIRSRLMPINKAYKLPKLMEAIEYYIQKTGRRVSFEYGLFGGVNDQVHHAEELADLLKGIKCHVNLIPVNYVPERDYVRTPREQIFLFEKTLKERGVNVTIRREQGHDIDAACGQLRAKERQEETR</sequence>
<feature type="chain" id="PRO_0000350036" description="Probable dual-specificity RNA methyltransferase RlmN">
    <location>
        <begin position="1"/>
        <end position="360"/>
    </location>
</feature>
<feature type="domain" description="Radical SAM core" evidence="2">
    <location>
        <begin position="109"/>
        <end position="342"/>
    </location>
</feature>
<feature type="active site" description="Proton acceptor" evidence="1">
    <location>
        <position position="103"/>
    </location>
</feature>
<feature type="active site" description="S-methylcysteine intermediate" evidence="1">
    <location>
        <position position="347"/>
    </location>
</feature>
<feature type="binding site" evidence="1">
    <location>
        <position position="123"/>
    </location>
    <ligand>
        <name>[4Fe-4S] cluster</name>
        <dbReference type="ChEBI" id="CHEBI:49883"/>
        <note>4Fe-4S-S-AdoMet</note>
    </ligand>
</feature>
<feature type="binding site" evidence="1">
    <location>
        <position position="127"/>
    </location>
    <ligand>
        <name>[4Fe-4S] cluster</name>
        <dbReference type="ChEBI" id="CHEBI:49883"/>
        <note>4Fe-4S-S-AdoMet</note>
    </ligand>
</feature>
<feature type="binding site" evidence="1">
    <location>
        <position position="130"/>
    </location>
    <ligand>
        <name>[4Fe-4S] cluster</name>
        <dbReference type="ChEBI" id="CHEBI:49883"/>
        <note>4Fe-4S-S-AdoMet</note>
    </ligand>
</feature>
<feature type="binding site" evidence="1">
    <location>
        <begin position="173"/>
        <end position="174"/>
    </location>
    <ligand>
        <name>S-adenosyl-L-methionine</name>
        <dbReference type="ChEBI" id="CHEBI:59789"/>
    </ligand>
</feature>
<feature type="binding site" evidence="1">
    <location>
        <position position="205"/>
    </location>
    <ligand>
        <name>S-adenosyl-L-methionine</name>
        <dbReference type="ChEBI" id="CHEBI:59789"/>
    </ligand>
</feature>
<feature type="binding site" evidence="1">
    <location>
        <begin position="228"/>
        <end position="230"/>
    </location>
    <ligand>
        <name>S-adenosyl-L-methionine</name>
        <dbReference type="ChEBI" id="CHEBI:59789"/>
    </ligand>
</feature>
<feature type="binding site" evidence="1">
    <location>
        <position position="304"/>
    </location>
    <ligand>
        <name>S-adenosyl-L-methionine</name>
        <dbReference type="ChEBI" id="CHEBI:59789"/>
    </ligand>
</feature>
<feature type="disulfide bond" description="(transient)" evidence="1">
    <location>
        <begin position="116"/>
        <end position="347"/>
    </location>
</feature>
<name>RLMN_BACP2</name>
<keyword id="KW-0004">4Fe-4S</keyword>
<keyword id="KW-0963">Cytoplasm</keyword>
<keyword id="KW-1015">Disulfide bond</keyword>
<keyword id="KW-0408">Iron</keyword>
<keyword id="KW-0411">Iron-sulfur</keyword>
<keyword id="KW-0479">Metal-binding</keyword>
<keyword id="KW-0489">Methyltransferase</keyword>
<keyword id="KW-0698">rRNA processing</keyword>
<keyword id="KW-0949">S-adenosyl-L-methionine</keyword>
<keyword id="KW-0808">Transferase</keyword>
<keyword id="KW-0819">tRNA processing</keyword>
<organism>
    <name type="scientific">Bacillus pumilus (strain SAFR-032)</name>
    <dbReference type="NCBI Taxonomy" id="315750"/>
    <lineage>
        <taxon>Bacteria</taxon>
        <taxon>Bacillati</taxon>
        <taxon>Bacillota</taxon>
        <taxon>Bacilli</taxon>
        <taxon>Bacillales</taxon>
        <taxon>Bacillaceae</taxon>
        <taxon>Bacillus</taxon>
    </lineage>
</organism>